<dbReference type="EC" id="1.2.1.70" evidence="1"/>
<dbReference type="EMBL" id="CU928163">
    <property type="protein sequence ID" value="CAR12714.1"/>
    <property type="molecule type" value="Genomic_DNA"/>
</dbReference>
<dbReference type="RefSeq" id="WP_001299679.1">
    <property type="nucleotide sequence ID" value="NC_011751.1"/>
</dbReference>
<dbReference type="RefSeq" id="YP_002412251.1">
    <property type="nucleotide sequence ID" value="NC_011751.1"/>
</dbReference>
<dbReference type="SMR" id="B7N421"/>
<dbReference type="STRING" id="585056.ECUMN_1507"/>
<dbReference type="KEGG" id="eum:ECUMN_1507"/>
<dbReference type="PATRIC" id="fig|585056.7.peg.1705"/>
<dbReference type="HOGENOM" id="CLU_035113_2_2_6"/>
<dbReference type="UniPathway" id="UPA00251">
    <property type="reaction ID" value="UER00316"/>
</dbReference>
<dbReference type="Proteomes" id="UP000007097">
    <property type="component" value="Chromosome"/>
</dbReference>
<dbReference type="GO" id="GO:0008883">
    <property type="term" value="F:glutamyl-tRNA reductase activity"/>
    <property type="evidence" value="ECO:0007669"/>
    <property type="project" value="UniProtKB-UniRule"/>
</dbReference>
<dbReference type="GO" id="GO:0050661">
    <property type="term" value="F:NADP binding"/>
    <property type="evidence" value="ECO:0007669"/>
    <property type="project" value="InterPro"/>
</dbReference>
<dbReference type="GO" id="GO:0019353">
    <property type="term" value="P:protoporphyrinogen IX biosynthetic process from glutamate"/>
    <property type="evidence" value="ECO:0007669"/>
    <property type="project" value="TreeGrafter"/>
</dbReference>
<dbReference type="CDD" id="cd05213">
    <property type="entry name" value="NAD_bind_Glutamyl_tRNA_reduct"/>
    <property type="match status" value="1"/>
</dbReference>
<dbReference type="FunFam" id="3.30.460.30:FF:000001">
    <property type="entry name" value="Glutamyl-tRNA reductase"/>
    <property type="match status" value="1"/>
</dbReference>
<dbReference type="FunFam" id="3.40.50.720:FF:000031">
    <property type="entry name" value="Glutamyl-tRNA reductase"/>
    <property type="match status" value="1"/>
</dbReference>
<dbReference type="Gene3D" id="3.30.460.30">
    <property type="entry name" value="Glutamyl-tRNA reductase, N-terminal domain"/>
    <property type="match status" value="1"/>
</dbReference>
<dbReference type="Gene3D" id="3.40.50.720">
    <property type="entry name" value="NAD(P)-binding Rossmann-like Domain"/>
    <property type="match status" value="1"/>
</dbReference>
<dbReference type="HAMAP" id="MF_00087">
    <property type="entry name" value="Glu_tRNA_reductase"/>
    <property type="match status" value="1"/>
</dbReference>
<dbReference type="InterPro" id="IPR000343">
    <property type="entry name" value="4pyrrol_synth_GluRdtase"/>
</dbReference>
<dbReference type="InterPro" id="IPR015896">
    <property type="entry name" value="4pyrrol_synth_GluRdtase_dimer"/>
</dbReference>
<dbReference type="InterPro" id="IPR015895">
    <property type="entry name" value="4pyrrol_synth_GluRdtase_N"/>
</dbReference>
<dbReference type="InterPro" id="IPR018214">
    <property type="entry name" value="GluRdtase_CS"/>
</dbReference>
<dbReference type="InterPro" id="IPR036453">
    <property type="entry name" value="GluRdtase_dimer_dom_sf"/>
</dbReference>
<dbReference type="InterPro" id="IPR036343">
    <property type="entry name" value="GluRdtase_N_sf"/>
</dbReference>
<dbReference type="InterPro" id="IPR036291">
    <property type="entry name" value="NAD(P)-bd_dom_sf"/>
</dbReference>
<dbReference type="InterPro" id="IPR006151">
    <property type="entry name" value="Shikm_DH/Glu-tRNA_Rdtase"/>
</dbReference>
<dbReference type="NCBIfam" id="TIGR01035">
    <property type="entry name" value="hemA"/>
    <property type="match status" value="1"/>
</dbReference>
<dbReference type="PANTHER" id="PTHR43013">
    <property type="entry name" value="GLUTAMYL-TRNA REDUCTASE"/>
    <property type="match status" value="1"/>
</dbReference>
<dbReference type="PANTHER" id="PTHR43013:SF1">
    <property type="entry name" value="GLUTAMYL-TRNA REDUCTASE"/>
    <property type="match status" value="1"/>
</dbReference>
<dbReference type="Pfam" id="PF00745">
    <property type="entry name" value="GlutR_dimer"/>
    <property type="match status" value="1"/>
</dbReference>
<dbReference type="Pfam" id="PF05201">
    <property type="entry name" value="GlutR_N"/>
    <property type="match status" value="1"/>
</dbReference>
<dbReference type="Pfam" id="PF01488">
    <property type="entry name" value="Shikimate_DH"/>
    <property type="match status" value="1"/>
</dbReference>
<dbReference type="PIRSF" id="PIRSF000445">
    <property type="entry name" value="4pyrrol_synth_GluRdtase"/>
    <property type="match status" value="1"/>
</dbReference>
<dbReference type="SUPFAM" id="SSF69742">
    <property type="entry name" value="Glutamyl tRNA-reductase catalytic, N-terminal domain"/>
    <property type="match status" value="1"/>
</dbReference>
<dbReference type="SUPFAM" id="SSF69075">
    <property type="entry name" value="Glutamyl tRNA-reductase dimerization domain"/>
    <property type="match status" value="1"/>
</dbReference>
<dbReference type="SUPFAM" id="SSF51735">
    <property type="entry name" value="NAD(P)-binding Rossmann-fold domains"/>
    <property type="match status" value="1"/>
</dbReference>
<dbReference type="PROSITE" id="PS00747">
    <property type="entry name" value="GLUTR"/>
    <property type="match status" value="1"/>
</dbReference>
<organism>
    <name type="scientific">Escherichia coli O17:K52:H18 (strain UMN026 / ExPEC)</name>
    <dbReference type="NCBI Taxonomy" id="585056"/>
    <lineage>
        <taxon>Bacteria</taxon>
        <taxon>Pseudomonadati</taxon>
        <taxon>Pseudomonadota</taxon>
        <taxon>Gammaproteobacteria</taxon>
        <taxon>Enterobacterales</taxon>
        <taxon>Enterobacteriaceae</taxon>
        <taxon>Escherichia</taxon>
    </lineage>
</organism>
<protein>
    <recommendedName>
        <fullName evidence="1">Glutamyl-tRNA reductase</fullName>
        <shortName evidence="1">GluTR</shortName>
        <ecNumber evidence="1">1.2.1.70</ecNumber>
    </recommendedName>
</protein>
<accession>B7N421</accession>
<proteinExistence type="inferred from homology"/>
<name>HEM1_ECOLU</name>
<evidence type="ECO:0000255" key="1">
    <source>
        <dbReference type="HAMAP-Rule" id="MF_00087"/>
    </source>
</evidence>
<sequence length="418" mass="46307">MTLLALGINHKTAPVSLRERVSFSPDKLDQALDSLLAQPMVQGGVVLSTCNRTELYLSVEEQDNLQEALIRWLCDYHNLNEEDLRKSLYWHQDNDAVSHLMRVASGLDSLVLGEPQILGQVKKAFADSQKGHMKASELERMFQKSFSVAKRVRTETDIGASAVSVAFAACTLARQIFESLSTVTVLLVGAGETIELVARHLREHKVQKMIIANRTRERAQILADEVGAEVIALSDIDERLREADIIISSTASPLPIIGKGMVERALKSRRNQPMLLVDIAVPRDVEPEVGKLANAYLYSVDDLQSIISHNLAQRKAAAVEAETIVAQETSEFMAWLRAQSASETIREYRSQAEQVRDELTAKALAALEQGGDAQAIMQDLAWKLTNRLIHAPTKSLQQAARDGDNERLNILRDSLGLE</sequence>
<gene>
    <name evidence="1" type="primary">hemA</name>
    <name type="ordered locus">ECUMN_1507</name>
</gene>
<keyword id="KW-0521">NADP</keyword>
<keyword id="KW-0560">Oxidoreductase</keyword>
<keyword id="KW-0627">Porphyrin biosynthesis</keyword>
<reference key="1">
    <citation type="journal article" date="2009" name="PLoS Genet.">
        <title>Organised genome dynamics in the Escherichia coli species results in highly diverse adaptive paths.</title>
        <authorList>
            <person name="Touchon M."/>
            <person name="Hoede C."/>
            <person name="Tenaillon O."/>
            <person name="Barbe V."/>
            <person name="Baeriswyl S."/>
            <person name="Bidet P."/>
            <person name="Bingen E."/>
            <person name="Bonacorsi S."/>
            <person name="Bouchier C."/>
            <person name="Bouvet O."/>
            <person name="Calteau A."/>
            <person name="Chiapello H."/>
            <person name="Clermont O."/>
            <person name="Cruveiller S."/>
            <person name="Danchin A."/>
            <person name="Diard M."/>
            <person name="Dossat C."/>
            <person name="Karoui M.E."/>
            <person name="Frapy E."/>
            <person name="Garry L."/>
            <person name="Ghigo J.M."/>
            <person name="Gilles A.M."/>
            <person name="Johnson J."/>
            <person name="Le Bouguenec C."/>
            <person name="Lescat M."/>
            <person name="Mangenot S."/>
            <person name="Martinez-Jehanne V."/>
            <person name="Matic I."/>
            <person name="Nassif X."/>
            <person name="Oztas S."/>
            <person name="Petit M.A."/>
            <person name="Pichon C."/>
            <person name="Rouy Z."/>
            <person name="Ruf C.S."/>
            <person name="Schneider D."/>
            <person name="Tourret J."/>
            <person name="Vacherie B."/>
            <person name="Vallenet D."/>
            <person name="Medigue C."/>
            <person name="Rocha E.P.C."/>
            <person name="Denamur E."/>
        </authorList>
    </citation>
    <scope>NUCLEOTIDE SEQUENCE [LARGE SCALE GENOMIC DNA]</scope>
    <source>
        <strain>UMN026 / ExPEC</strain>
    </source>
</reference>
<comment type="function">
    <text evidence="1">Catalyzes the NADPH-dependent reduction of glutamyl-tRNA(Glu) to glutamate 1-semialdehyde (GSA).</text>
</comment>
<comment type="catalytic activity">
    <reaction evidence="1">
        <text>(S)-4-amino-5-oxopentanoate + tRNA(Glu) + NADP(+) = L-glutamyl-tRNA(Glu) + NADPH + H(+)</text>
        <dbReference type="Rhea" id="RHEA:12344"/>
        <dbReference type="Rhea" id="RHEA-COMP:9663"/>
        <dbReference type="Rhea" id="RHEA-COMP:9680"/>
        <dbReference type="ChEBI" id="CHEBI:15378"/>
        <dbReference type="ChEBI" id="CHEBI:57501"/>
        <dbReference type="ChEBI" id="CHEBI:57783"/>
        <dbReference type="ChEBI" id="CHEBI:58349"/>
        <dbReference type="ChEBI" id="CHEBI:78442"/>
        <dbReference type="ChEBI" id="CHEBI:78520"/>
        <dbReference type="EC" id="1.2.1.70"/>
    </reaction>
</comment>
<comment type="pathway">
    <text evidence="1">Porphyrin-containing compound metabolism; protoporphyrin-IX biosynthesis; 5-aminolevulinate from L-glutamyl-tRNA(Glu): step 1/2.</text>
</comment>
<comment type="subunit">
    <text evidence="1">Homodimer.</text>
</comment>
<comment type="domain">
    <text evidence="1">Possesses an unusual extended V-shaped dimeric structure with each monomer consisting of three distinct domains arranged along a curved 'spinal' alpha-helix. The N-terminal catalytic domain specifically recognizes the glutamate moiety of the substrate. The second domain is the NADPH-binding domain, and the third C-terminal domain is responsible for dimerization.</text>
</comment>
<comment type="miscellaneous">
    <text evidence="1">During catalysis, the active site Cys acts as a nucleophile attacking the alpha-carbonyl group of tRNA-bound glutamate with the formation of a thioester intermediate between enzyme and glutamate, and the concomitant release of tRNA(Glu). The thioester intermediate is finally reduced by direct hydride transfer from NADPH, to form the product GSA.</text>
</comment>
<comment type="similarity">
    <text evidence="1">Belongs to the glutamyl-tRNA reductase family.</text>
</comment>
<feature type="chain" id="PRO_1000190524" description="Glutamyl-tRNA reductase">
    <location>
        <begin position="1"/>
        <end position="418"/>
    </location>
</feature>
<feature type="active site" description="Nucleophile" evidence="1">
    <location>
        <position position="50"/>
    </location>
</feature>
<feature type="binding site" evidence="1">
    <location>
        <begin position="49"/>
        <end position="52"/>
    </location>
    <ligand>
        <name>substrate</name>
    </ligand>
</feature>
<feature type="binding site" evidence="1">
    <location>
        <position position="109"/>
    </location>
    <ligand>
        <name>substrate</name>
    </ligand>
</feature>
<feature type="binding site" evidence="1">
    <location>
        <begin position="114"/>
        <end position="116"/>
    </location>
    <ligand>
        <name>substrate</name>
    </ligand>
</feature>
<feature type="binding site" evidence="1">
    <location>
        <position position="120"/>
    </location>
    <ligand>
        <name>substrate</name>
    </ligand>
</feature>
<feature type="binding site" evidence="1">
    <location>
        <begin position="189"/>
        <end position="194"/>
    </location>
    <ligand>
        <name>NADP(+)</name>
        <dbReference type="ChEBI" id="CHEBI:58349"/>
    </ligand>
</feature>
<feature type="site" description="Important for activity" evidence="1">
    <location>
        <position position="99"/>
    </location>
</feature>